<protein>
    <recommendedName>
        <fullName evidence="1">Cytoplasmic tRNA 2-thiolation protein 1</fullName>
        <ecNumber evidence="1">2.7.7.-</ecNumber>
    </recommendedName>
    <alternativeName>
        <fullName evidence="1">Cytoplasmic tRNA adenylyltransferase 1</fullName>
    </alternativeName>
</protein>
<name>CTU1_CHLRE</name>
<accession>A8JF71</accession>
<keyword id="KW-0963">Cytoplasm</keyword>
<keyword id="KW-0694">RNA-binding</keyword>
<keyword id="KW-0808">Transferase</keyword>
<keyword id="KW-0819">tRNA processing</keyword>
<keyword id="KW-0820">tRNA-binding</keyword>
<proteinExistence type="inferred from homology"/>
<dbReference type="EC" id="2.7.7.-" evidence="1"/>
<dbReference type="EMBL" id="DS496174">
    <property type="protein sequence ID" value="EDO97463.1"/>
    <property type="molecule type" value="Genomic_DNA"/>
</dbReference>
<dbReference type="RefSeq" id="XP_001701466.1">
    <property type="nucleotide sequence ID" value="XM_001701414.1"/>
</dbReference>
<dbReference type="SMR" id="A8JF71"/>
<dbReference type="PaxDb" id="3055-EDO97463"/>
<dbReference type="eggNOG" id="KOG2840">
    <property type="taxonomic scope" value="Eukaryota"/>
</dbReference>
<dbReference type="HOGENOM" id="CLU_026481_1_2_1"/>
<dbReference type="UniPathway" id="UPA00988"/>
<dbReference type="GO" id="GO:0005737">
    <property type="term" value="C:cytoplasm"/>
    <property type="evidence" value="ECO:0007669"/>
    <property type="project" value="UniProtKB-SubCell"/>
</dbReference>
<dbReference type="GO" id="GO:0016779">
    <property type="term" value="F:nucleotidyltransferase activity"/>
    <property type="evidence" value="ECO:0007669"/>
    <property type="project" value="UniProtKB-UniRule"/>
</dbReference>
<dbReference type="GO" id="GO:0000049">
    <property type="term" value="F:tRNA binding"/>
    <property type="evidence" value="ECO:0007669"/>
    <property type="project" value="UniProtKB-UniRule"/>
</dbReference>
<dbReference type="GO" id="GO:0032447">
    <property type="term" value="P:protein urmylation"/>
    <property type="evidence" value="ECO:0007669"/>
    <property type="project" value="UniProtKB-UniRule"/>
</dbReference>
<dbReference type="GO" id="GO:0034227">
    <property type="term" value="P:tRNA thio-modification"/>
    <property type="evidence" value="ECO:0007669"/>
    <property type="project" value="UniProtKB-UniRule"/>
</dbReference>
<dbReference type="GO" id="GO:0002098">
    <property type="term" value="P:tRNA wobble uridine modification"/>
    <property type="evidence" value="ECO:0007669"/>
    <property type="project" value="UniProtKB-UniRule"/>
</dbReference>
<dbReference type="CDD" id="cd01713">
    <property type="entry name" value="CTU1-like"/>
    <property type="match status" value="1"/>
</dbReference>
<dbReference type="FunFam" id="3.40.50.620:FF:000054">
    <property type="entry name" value="Cytoplasmic tRNA 2-thiolation protein 1"/>
    <property type="match status" value="1"/>
</dbReference>
<dbReference type="Gene3D" id="3.40.50.620">
    <property type="entry name" value="HUPs"/>
    <property type="match status" value="1"/>
</dbReference>
<dbReference type="HAMAP" id="MF_03053">
    <property type="entry name" value="CTU1"/>
    <property type="match status" value="1"/>
</dbReference>
<dbReference type="InterPro" id="IPR056369">
    <property type="entry name" value="CTU1-like_ATP-bd"/>
</dbReference>
<dbReference type="InterPro" id="IPR032442">
    <property type="entry name" value="CTU1_C"/>
</dbReference>
<dbReference type="InterPro" id="IPR000541">
    <property type="entry name" value="Ncs6/Tuc1/Ctu1"/>
</dbReference>
<dbReference type="InterPro" id="IPR014729">
    <property type="entry name" value="Rossmann-like_a/b/a_fold"/>
</dbReference>
<dbReference type="InterPro" id="IPR011063">
    <property type="entry name" value="TilS/TtcA_N"/>
</dbReference>
<dbReference type="InterPro" id="IPR035107">
    <property type="entry name" value="tRNA_thiolation_TtcA_Ctu1"/>
</dbReference>
<dbReference type="NCBIfam" id="TIGR00269">
    <property type="entry name" value="TIGR00269 family protein"/>
    <property type="match status" value="1"/>
</dbReference>
<dbReference type="PANTHER" id="PTHR11807">
    <property type="entry name" value="ATPASES OF THE PP SUPERFAMILY-RELATED"/>
    <property type="match status" value="1"/>
</dbReference>
<dbReference type="PANTHER" id="PTHR11807:SF12">
    <property type="entry name" value="CYTOPLASMIC TRNA 2-THIOLATION PROTEIN 1"/>
    <property type="match status" value="1"/>
</dbReference>
<dbReference type="Pfam" id="PF01171">
    <property type="entry name" value="ATP_bind_3"/>
    <property type="match status" value="1"/>
</dbReference>
<dbReference type="Pfam" id="PF16503">
    <property type="entry name" value="zn-ribbon_14"/>
    <property type="match status" value="1"/>
</dbReference>
<dbReference type="PIRSF" id="PIRSF004976">
    <property type="entry name" value="ATPase_YdaO"/>
    <property type="match status" value="1"/>
</dbReference>
<dbReference type="SUPFAM" id="SSF52402">
    <property type="entry name" value="Adenine nucleotide alpha hydrolases-like"/>
    <property type="match status" value="1"/>
</dbReference>
<evidence type="ECO:0000255" key="1">
    <source>
        <dbReference type="HAMAP-Rule" id="MF_03053"/>
    </source>
</evidence>
<evidence type="ECO:0000256" key="2">
    <source>
        <dbReference type="SAM" id="MobiDB-lite"/>
    </source>
</evidence>
<reference key="1">
    <citation type="journal article" date="2007" name="Science">
        <title>The Chlamydomonas genome reveals the evolution of key animal and plant functions.</title>
        <authorList>
            <person name="Merchant S.S."/>
            <person name="Prochnik S.E."/>
            <person name="Vallon O."/>
            <person name="Harris E.H."/>
            <person name="Karpowicz S.J."/>
            <person name="Witman G.B."/>
            <person name="Terry A."/>
            <person name="Salamov A."/>
            <person name="Fritz-Laylin L.K."/>
            <person name="Marechal-Drouard L."/>
            <person name="Marshall W.F."/>
            <person name="Qu L.H."/>
            <person name="Nelson D.R."/>
            <person name="Sanderfoot A.A."/>
            <person name="Spalding M.H."/>
            <person name="Kapitonov V.V."/>
            <person name="Ren Q."/>
            <person name="Ferris P."/>
            <person name="Lindquist E."/>
            <person name="Shapiro H."/>
            <person name="Lucas S.M."/>
            <person name="Grimwood J."/>
            <person name="Schmutz J."/>
            <person name="Cardol P."/>
            <person name="Cerutti H."/>
            <person name="Chanfreau G."/>
            <person name="Chen C.L."/>
            <person name="Cognat V."/>
            <person name="Croft M.T."/>
            <person name="Dent R."/>
            <person name="Dutcher S."/>
            <person name="Fernandez E."/>
            <person name="Fukuzawa H."/>
            <person name="Gonzalez-Ballester D."/>
            <person name="Gonzalez-Halphen D."/>
            <person name="Hallmann A."/>
            <person name="Hanikenne M."/>
            <person name="Hippler M."/>
            <person name="Inwood W."/>
            <person name="Jabbari K."/>
            <person name="Kalanon M."/>
            <person name="Kuras R."/>
            <person name="Lefebvre P.A."/>
            <person name="Lemaire S.D."/>
            <person name="Lobanov A.V."/>
            <person name="Lohr M."/>
            <person name="Manuell A."/>
            <person name="Meier I."/>
            <person name="Mets L."/>
            <person name="Mittag M."/>
            <person name="Mittelmeier T."/>
            <person name="Moroney J.V."/>
            <person name="Moseley J."/>
            <person name="Napoli C."/>
            <person name="Nedelcu A.M."/>
            <person name="Niyogi K."/>
            <person name="Novoselov S.V."/>
            <person name="Paulsen I.T."/>
            <person name="Pazour G.J."/>
            <person name="Purton S."/>
            <person name="Ral J.P."/>
            <person name="Riano-Pachon D.M."/>
            <person name="Riekhof W."/>
            <person name="Rymarquis L."/>
            <person name="Schroda M."/>
            <person name="Stern D."/>
            <person name="Umen J."/>
            <person name="Willows R."/>
            <person name="Wilson N."/>
            <person name="Zimmer S.L."/>
            <person name="Allmer J."/>
            <person name="Balk J."/>
            <person name="Bisova K."/>
            <person name="Chen C.J."/>
            <person name="Elias M."/>
            <person name="Gendler K."/>
            <person name="Hauser C."/>
            <person name="Lamb M.R."/>
            <person name="Ledford H."/>
            <person name="Long J.C."/>
            <person name="Minagawa J."/>
            <person name="Page M.D."/>
            <person name="Pan J."/>
            <person name="Pootakham W."/>
            <person name="Roje S."/>
            <person name="Rose A."/>
            <person name="Stahlberg E."/>
            <person name="Terauchi A.M."/>
            <person name="Yang P."/>
            <person name="Ball S."/>
            <person name="Bowler C."/>
            <person name="Dieckmann C.L."/>
            <person name="Gladyshev V.N."/>
            <person name="Green P."/>
            <person name="Jorgensen R."/>
            <person name="Mayfield S."/>
            <person name="Mueller-Roeber B."/>
            <person name="Rajamani S."/>
            <person name="Sayre R.T."/>
            <person name="Brokstein P."/>
            <person name="Dubchak I."/>
            <person name="Goodstein D."/>
            <person name="Hornick L."/>
            <person name="Huang Y.W."/>
            <person name="Jhaveri J."/>
            <person name="Luo Y."/>
            <person name="Martinez D."/>
            <person name="Ngau W.C."/>
            <person name="Otillar B."/>
            <person name="Poliakov A."/>
            <person name="Porter A."/>
            <person name="Szajkowski L."/>
            <person name="Werner G."/>
            <person name="Zhou K."/>
            <person name="Grigoriev I.V."/>
            <person name="Rokhsar D.S."/>
            <person name="Grossman A.R."/>
        </authorList>
    </citation>
    <scope>NUCLEOTIDE SEQUENCE [LARGE SCALE GENOMIC DNA]</scope>
    <source>
        <strain>CC-503</strain>
        <strain>cw92</strain>
    </source>
</reference>
<organism>
    <name type="scientific">Chlamydomonas reinhardtii</name>
    <name type="common">Chlamydomonas smithii</name>
    <dbReference type="NCBI Taxonomy" id="3055"/>
    <lineage>
        <taxon>Eukaryota</taxon>
        <taxon>Viridiplantae</taxon>
        <taxon>Chlorophyta</taxon>
        <taxon>core chlorophytes</taxon>
        <taxon>Chlorophyceae</taxon>
        <taxon>CS clade</taxon>
        <taxon>Chlamydomonadales</taxon>
        <taxon>Chlamydomonadaceae</taxon>
        <taxon>Chlamydomonas</taxon>
    </lineage>
</organism>
<gene>
    <name evidence="1" type="primary">NCS6</name>
    <name evidence="1" type="synonym">CTU1</name>
    <name type="ORF">CHLREDRAFT_153738</name>
</gene>
<sequence>MPPRLCVRCNTSRAMLNRPKTQEQVCRECFFTAFEEEVHQTIVDNKLFKHGERLAVAASGGKDSTVLAHIMSTLNARYNYGLDLFLLSIDEGITGYRDDSLETVKRNEQQYGIPLKVVSYKELYGWTMDEIVSQIGTKNNCTFCGVFRRQALDRGAVLMGANKIATGHNADDVAETVLLNILRGDVPRLGRCANIITGEDSSLPRVKPFKYAYEKEIVLYAYYKKLDYFSTECIYAPFAARGFAREFIKDLEAARPLAIIDVIRSAEDFVFAAASDEKLPQPRTCERCGYISSQPVCKACVLLEGLNRGMPRLGVSRTRGRRGEKAGLHPDVGRGGGGGSSGPAEVASPVEIVYETT</sequence>
<feature type="chain" id="PRO_0000368253" description="Cytoplasmic tRNA 2-thiolation protein 1">
    <location>
        <begin position="1"/>
        <end position="357"/>
    </location>
</feature>
<feature type="region of interest" description="Disordered" evidence="2">
    <location>
        <begin position="314"/>
        <end position="348"/>
    </location>
</feature>
<feature type="compositionally biased region" description="Basic and acidic residues" evidence="2">
    <location>
        <begin position="321"/>
        <end position="332"/>
    </location>
</feature>
<comment type="function">
    <text evidence="1">Plays a central role in 2-thiolation of mcm(5)S(2)U at tRNA wobble positions of tRNA(Lys), tRNA(Glu) and tRNA(Gln). Directly binds tRNAs and probably acts by catalyzing adenylation of tRNAs, an intermediate required for 2-thiolation. It is unclear whether it acts as a sulfurtransferase that transfers sulfur from thiocarboxylated URM1 onto the uridine of tRNAs at wobble position.</text>
</comment>
<comment type="pathway">
    <text evidence="1">tRNA modification; 5-methoxycarbonylmethyl-2-thiouridine-tRNA biosynthesis.</text>
</comment>
<comment type="subcellular location">
    <subcellularLocation>
        <location evidence="1">Cytoplasm</location>
    </subcellularLocation>
</comment>
<comment type="similarity">
    <text evidence="1">Belongs to the TtcA family. CTU1/NCS6/ATPBD3 subfamily.</text>
</comment>